<gene>
    <name evidence="1" type="primary">rlmN</name>
    <name type="ordered locus">LHK_00683</name>
</gene>
<proteinExistence type="inferred from homology"/>
<evidence type="ECO:0000255" key="1">
    <source>
        <dbReference type="HAMAP-Rule" id="MF_01849"/>
    </source>
</evidence>
<evidence type="ECO:0000255" key="2">
    <source>
        <dbReference type="PROSITE-ProRule" id="PRU01266"/>
    </source>
</evidence>
<organism>
    <name type="scientific">Laribacter hongkongensis (strain HLHK9)</name>
    <dbReference type="NCBI Taxonomy" id="557598"/>
    <lineage>
        <taxon>Bacteria</taxon>
        <taxon>Pseudomonadati</taxon>
        <taxon>Pseudomonadota</taxon>
        <taxon>Betaproteobacteria</taxon>
        <taxon>Neisseriales</taxon>
        <taxon>Aquaspirillaceae</taxon>
        <taxon>Laribacter</taxon>
    </lineage>
</organism>
<dbReference type="EC" id="2.1.1.192" evidence="1"/>
<dbReference type="EMBL" id="CP001154">
    <property type="protein sequence ID" value="ACO73676.1"/>
    <property type="molecule type" value="Genomic_DNA"/>
</dbReference>
<dbReference type="RefSeq" id="WP_012696168.1">
    <property type="nucleotide sequence ID" value="NC_012559.1"/>
</dbReference>
<dbReference type="SMR" id="C1DD41"/>
<dbReference type="STRING" id="557598.LHK_00683"/>
<dbReference type="KEGG" id="lhk:LHK_00683"/>
<dbReference type="eggNOG" id="COG0820">
    <property type="taxonomic scope" value="Bacteria"/>
</dbReference>
<dbReference type="HOGENOM" id="CLU_029101_0_0_4"/>
<dbReference type="Proteomes" id="UP000002010">
    <property type="component" value="Chromosome"/>
</dbReference>
<dbReference type="GO" id="GO:0005737">
    <property type="term" value="C:cytoplasm"/>
    <property type="evidence" value="ECO:0007669"/>
    <property type="project" value="UniProtKB-SubCell"/>
</dbReference>
<dbReference type="GO" id="GO:0051539">
    <property type="term" value="F:4 iron, 4 sulfur cluster binding"/>
    <property type="evidence" value="ECO:0007669"/>
    <property type="project" value="UniProtKB-UniRule"/>
</dbReference>
<dbReference type="GO" id="GO:0046872">
    <property type="term" value="F:metal ion binding"/>
    <property type="evidence" value="ECO:0007669"/>
    <property type="project" value="UniProtKB-KW"/>
</dbReference>
<dbReference type="GO" id="GO:0070040">
    <property type="term" value="F:rRNA (adenine(2503)-C2-)-methyltransferase activity"/>
    <property type="evidence" value="ECO:0007669"/>
    <property type="project" value="UniProtKB-UniRule"/>
</dbReference>
<dbReference type="GO" id="GO:0019843">
    <property type="term" value="F:rRNA binding"/>
    <property type="evidence" value="ECO:0007669"/>
    <property type="project" value="UniProtKB-UniRule"/>
</dbReference>
<dbReference type="GO" id="GO:0002935">
    <property type="term" value="F:tRNA (adenine(37)-C2)-methyltransferase activity"/>
    <property type="evidence" value="ECO:0007669"/>
    <property type="project" value="UniProtKB-UniRule"/>
</dbReference>
<dbReference type="GO" id="GO:0000049">
    <property type="term" value="F:tRNA binding"/>
    <property type="evidence" value="ECO:0007669"/>
    <property type="project" value="UniProtKB-UniRule"/>
</dbReference>
<dbReference type="GO" id="GO:0070475">
    <property type="term" value="P:rRNA base methylation"/>
    <property type="evidence" value="ECO:0007669"/>
    <property type="project" value="UniProtKB-UniRule"/>
</dbReference>
<dbReference type="GO" id="GO:0030488">
    <property type="term" value="P:tRNA methylation"/>
    <property type="evidence" value="ECO:0007669"/>
    <property type="project" value="UniProtKB-UniRule"/>
</dbReference>
<dbReference type="CDD" id="cd01335">
    <property type="entry name" value="Radical_SAM"/>
    <property type="match status" value="1"/>
</dbReference>
<dbReference type="FunFam" id="1.10.150.530:FF:000003">
    <property type="entry name" value="Dual-specificity RNA methyltransferase RlmN"/>
    <property type="match status" value="1"/>
</dbReference>
<dbReference type="FunFam" id="3.20.20.70:FF:000008">
    <property type="entry name" value="Dual-specificity RNA methyltransferase RlmN"/>
    <property type="match status" value="1"/>
</dbReference>
<dbReference type="Gene3D" id="1.10.150.530">
    <property type="match status" value="1"/>
</dbReference>
<dbReference type="Gene3D" id="3.20.20.70">
    <property type="entry name" value="Aldolase class I"/>
    <property type="match status" value="1"/>
</dbReference>
<dbReference type="HAMAP" id="MF_01849">
    <property type="entry name" value="RNA_methyltr_RlmN"/>
    <property type="match status" value="1"/>
</dbReference>
<dbReference type="InterPro" id="IPR013785">
    <property type="entry name" value="Aldolase_TIM"/>
</dbReference>
<dbReference type="InterPro" id="IPR040072">
    <property type="entry name" value="Methyltransferase_A"/>
</dbReference>
<dbReference type="InterPro" id="IPR048641">
    <property type="entry name" value="RlmN_N"/>
</dbReference>
<dbReference type="InterPro" id="IPR027492">
    <property type="entry name" value="RNA_MTrfase_RlmN"/>
</dbReference>
<dbReference type="InterPro" id="IPR004383">
    <property type="entry name" value="rRNA_lsu_MTrfase_RlmN/Cfr"/>
</dbReference>
<dbReference type="InterPro" id="IPR007197">
    <property type="entry name" value="rSAM"/>
</dbReference>
<dbReference type="NCBIfam" id="TIGR00048">
    <property type="entry name" value="rRNA_mod_RlmN"/>
    <property type="match status" value="1"/>
</dbReference>
<dbReference type="PANTHER" id="PTHR30544">
    <property type="entry name" value="23S RRNA METHYLTRANSFERASE"/>
    <property type="match status" value="1"/>
</dbReference>
<dbReference type="PANTHER" id="PTHR30544:SF5">
    <property type="entry name" value="RADICAL SAM CORE DOMAIN-CONTAINING PROTEIN"/>
    <property type="match status" value="1"/>
</dbReference>
<dbReference type="Pfam" id="PF04055">
    <property type="entry name" value="Radical_SAM"/>
    <property type="match status" value="1"/>
</dbReference>
<dbReference type="Pfam" id="PF21016">
    <property type="entry name" value="RlmN_N"/>
    <property type="match status" value="1"/>
</dbReference>
<dbReference type="PIRSF" id="PIRSF006004">
    <property type="entry name" value="CHP00048"/>
    <property type="match status" value="1"/>
</dbReference>
<dbReference type="SFLD" id="SFLDF00275">
    <property type="entry name" value="adenosine_C2_methyltransferase"/>
    <property type="match status" value="1"/>
</dbReference>
<dbReference type="SFLD" id="SFLDS00029">
    <property type="entry name" value="Radical_SAM"/>
    <property type="match status" value="1"/>
</dbReference>
<dbReference type="SUPFAM" id="SSF102114">
    <property type="entry name" value="Radical SAM enzymes"/>
    <property type="match status" value="1"/>
</dbReference>
<dbReference type="PROSITE" id="PS51918">
    <property type="entry name" value="RADICAL_SAM"/>
    <property type="match status" value="1"/>
</dbReference>
<name>RLMN_LARHH</name>
<protein>
    <recommendedName>
        <fullName evidence="1">Dual-specificity RNA methyltransferase RlmN</fullName>
        <ecNumber evidence="1">2.1.1.192</ecNumber>
    </recommendedName>
    <alternativeName>
        <fullName evidence="1">23S rRNA (adenine(2503)-C(2))-methyltransferase</fullName>
    </alternativeName>
    <alternativeName>
        <fullName evidence="1">23S rRNA m2A2503 methyltransferase</fullName>
    </alternativeName>
    <alternativeName>
        <fullName evidence="1">Ribosomal RNA large subunit methyltransferase N</fullName>
    </alternativeName>
    <alternativeName>
        <fullName evidence="1">tRNA (adenine(37)-C(2))-methyltransferase</fullName>
    </alternativeName>
    <alternativeName>
        <fullName evidence="1">tRNA m2A37 methyltransferase</fullName>
    </alternativeName>
</protein>
<accession>C1DD41</accession>
<keyword id="KW-0004">4Fe-4S</keyword>
<keyword id="KW-0963">Cytoplasm</keyword>
<keyword id="KW-1015">Disulfide bond</keyword>
<keyword id="KW-0408">Iron</keyword>
<keyword id="KW-0411">Iron-sulfur</keyword>
<keyword id="KW-0479">Metal-binding</keyword>
<keyword id="KW-0489">Methyltransferase</keyword>
<keyword id="KW-1185">Reference proteome</keyword>
<keyword id="KW-0698">rRNA processing</keyword>
<keyword id="KW-0949">S-adenosyl-L-methionine</keyword>
<keyword id="KW-0808">Transferase</keyword>
<keyword id="KW-0819">tRNA processing</keyword>
<sequence>MKTNLLDFTLPALTEHFAAMGEKPFRAKQVMRWMHQMGQNDFDAMTDLAKSLRAKLHDTATVTVPSLMLEQASSDGTRKWLLDVGTGNRVETVFIPEDDRGTLCVSSQVGCALECTFCSTGRQGFNRNLSTAEIIGQLWWANKSMGVTPKNERVISNVVMMGMGEPLANYDNVVAAMRIMLDDHGYGLSRRRVTLSTSGLVPAMDRLREDCPVALAVSLHAPNDRIRDEIVPINKKYPLRELLAACERYLEKAPRDFVTFEYVMLDQINDRPEHARELVALVRDVPCKFNLIPFNPFPNSGYGRASNNAVRAFRDILAEAGYITTVRKTRGEDIDAACGQLAGQVQDKTQRKVRWLDKGGSTEAGV</sequence>
<feature type="chain" id="PRO_1000188582" description="Dual-specificity RNA methyltransferase RlmN">
    <location>
        <begin position="1"/>
        <end position="366"/>
    </location>
</feature>
<feature type="domain" description="Radical SAM core" evidence="2">
    <location>
        <begin position="97"/>
        <end position="333"/>
    </location>
</feature>
<feature type="active site" description="Proton acceptor" evidence="1">
    <location>
        <position position="91"/>
    </location>
</feature>
<feature type="active site" description="S-methylcysteine intermediate" evidence="1">
    <location>
        <position position="338"/>
    </location>
</feature>
<feature type="binding site" evidence="1">
    <location>
        <position position="111"/>
    </location>
    <ligand>
        <name>[4Fe-4S] cluster</name>
        <dbReference type="ChEBI" id="CHEBI:49883"/>
        <note>4Fe-4S-S-AdoMet</note>
    </ligand>
</feature>
<feature type="binding site" evidence="1">
    <location>
        <position position="115"/>
    </location>
    <ligand>
        <name>[4Fe-4S] cluster</name>
        <dbReference type="ChEBI" id="CHEBI:49883"/>
        <note>4Fe-4S-S-AdoMet</note>
    </ligand>
</feature>
<feature type="binding site" evidence="1">
    <location>
        <position position="118"/>
    </location>
    <ligand>
        <name>[4Fe-4S] cluster</name>
        <dbReference type="ChEBI" id="CHEBI:49883"/>
        <note>4Fe-4S-S-AdoMet</note>
    </ligand>
</feature>
<feature type="binding site" evidence="1">
    <location>
        <begin position="164"/>
        <end position="165"/>
    </location>
    <ligand>
        <name>S-adenosyl-L-methionine</name>
        <dbReference type="ChEBI" id="CHEBI:59789"/>
    </ligand>
</feature>
<feature type="binding site" evidence="1">
    <location>
        <position position="196"/>
    </location>
    <ligand>
        <name>S-adenosyl-L-methionine</name>
        <dbReference type="ChEBI" id="CHEBI:59789"/>
    </ligand>
</feature>
<feature type="binding site" evidence="1">
    <location>
        <begin position="218"/>
        <end position="220"/>
    </location>
    <ligand>
        <name>S-adenosyl-L-methionine</name>
        <dbReference type="ChEBI" id="CHEBI:59789"/>
    </ligand>
</feature>
<feature type="binding site" evidence="1">
    <location>
        <position position="295"/>
    </location>
    <ligand>
        <name>S-adenosyl-L-methionine</name>
        <dbReference type="ChEBI" id="CHEBI:59789"/>
    </ligand>
</feature>
<feature type="disulfide bond" description="(transient)" evidence="1">
    <location>
        <begin position="104"/>
        <end position="338"/>
    </location>
</feature>
<reference key="1">
    <citation type="journal article" date="2009" name="PLoS Genet.">
        <title>The complete genome and proteome of Laribacter hongkongensis reveal potential mechanisms for adaptations to different temperatures and habitats.</title>
        <authorList>
            <person name="Woo P.C.Y."/>
            <person name="Lau S.K.P."/>
            <person name="Tse H."/>
            <person name="Teng J.L.L."/>
            <person name="Curreem S.O."/>
            <person name="Tsang A.K.L."/>
            <person name="Fan R.Y.Y."/>
            <person name="Wong G.K.M."/>
            <person name="Huang Y."/>
            <person name="Loman N.J."/>
            <person name="Snyder L.A.S."/>
            <person name="Cai J.J."/>
            <person name="Huang J.-D."/>
            <person name="Mak W."/>
            <person name="Pallen M.J."/>
            <person name="Lok S."/>
            <person name="Yuen K.-Y."/>
        </authorList>
    </citation>
    <scope>NUCLEOTIDE SEQUENCE [LARGE SCALE GENOMIC DNA]</scope>
    <source>
        <strain>HLHK9</strain>
    </source>
</reference>
<comment type="function">
    <text evidence="1">Specifically methylates position 2 of adenine 2503 in 23S rRNA and position 2 of adenine 37 in tRNAs. m2A2503 modification seems to play a crucial role in the proofreading step occurring at the peptidyl transferase center and thus would serve to optimize ribosomal fidelity.</text>
</comment>
<comment type="catalytic activity">
    <reaction evidence="1">
        <text>adenosine(2503) in 23S rRNA + 2 reduced [2Fe-2S]-[ferredoxin] + 2 S-adenosyl-L-methionine = 2-methyladenosine(2503) in 23S rRNA + 5'-deoxyadenosine + L-methionine + 2 oxidized [2Fe-2S]-[ferredoxin] + S-adenosyl-L-homocysteine</text>
        <dbReference type="Rhea" id="RHEA:42916"/>
        <dbReference type="Rhea" id="RHEA-COMP:10000"/>
        <dbReference type="Rhea" id="RHEA-COMP:10001"/>
        <dbReference type="Rhea" id="RHEA-COMP:10152"/>
        <dbReference type="Rhea" id="RHEA-COMP:10282"/>
        <dbReference type="ChEBI" id="CHEBI:17319"/>
        <dbReference type="ChEBI" id="CHEBI:33737"/>
        <dbReference type="ChEBI" id="CHEBI:33738"/>
        <dbReference type="ChEBI" id="CHEBI:57844"/>
        <dbReference type="ChEBI" id="CHEBI:57856"/>
        <dbReference type="ChEBI" id="CHEBI:59789"/>
        <dbReference type="ChEBI" id="CHEBI:74411"/>
        <dbReference type="ChEBI" id="CHEBI:74497"/>
        <dbReference type="EC" id="2.1.1.192"/>
    </reaction>
</comment>
<comment type="catalytic activity">
    <reaction evidence="1">
        <text>adenosine(37) in tRNA + 2 reduced [2Fe-2S]-[ferredoxin] + 2 S-adenosyl-L-methionine = 2-methyladenosine(37) in tRNA + 5'-deoxyadenosine + L-methionine + 2 oxidized [2Fe-2S]-[ferredoxin] + S-adenosyl-L-homocysteine</text>
        <dbReference type="Rhea" id="RHEA:43332"/>
        <dbReference type="Rhea" id="RHEA-COMP:10000"/>
        <dbReference type="Rhea" id="RHEA-COMP:10001"/>
        <dbReference type="Rhea" id="RHEA-COMP:10162"/>
        <dbReference type="Rhea" id="RHEA-COMP:10485"/>
        <dbReference type="ChEBI" id="CHEBI:17319"/>
        <dbReference type="ChEBI" id="CHEBI:33737"/>
        <dbReference type="ChEBI" id="CHEBI:33738"/>
        <dbReference type="ChEBI" id="CHEBI:57844"/>
        <dbReference type="ChEBI" id="CHEBI:57856"/>
        <dbReference type="ChEBI" id="CHEBI:59789"/>
        <dbReference type="ChEBI" id="CHEBI:74411"/>
        <dbReference type="ChEBI" id="CHEBI:74497"/>
        <dbReference type="EC" id="2.1.1.192"/>
    </reaction>
</comment>
<comment type="cofactor">
    <cofactor evidence="1">
        <name>[4Fe-4S] cluster</name>
        <dbReference type="ChEBI" id="CHEBI:49883"/>
    </cofactor>
    <text evidence="1">Binds 1 [4Fe-4S] cluster. The cluster is coordinated with 3 cysteines and an exchangeable S-adenosyl-L-methionine.</text>
</comment>
<comment type="subcellular location">
    <subcellularLocation>
        <location evidence="1">Cytoplasm</location>
    </subcellularLocation>
</comment>
<comment type="miscellaneous">
    <text evidence="1">Reaction proceeds by a ping-pong mechanism involving intermediate methylation of a conserved cysteine residue.</text>
</comment>
<comment type="similarity">
    <text evidence="1">Belongs to the radical SAM superfamily. RlmN family.</text>
</comment>